<organism>
    <name type="scientific">Rickettsia typhi (strain ATCC VR-144 / Wilmington)</name>
    <dbReference type="NCBI Taxonomy" id="257363"/>
    <lineage>
        <taxon>Bacteria</taxon>
        <taxon>Pseudomonadati</taxon>
        <taxon>Pseudomonadota</taxon>
        <taxon>Alphaproteobacteria</taxon>
        <taxon>Rickettsiales</taxon>
        <taxon>Rickettsiaceae</taxon>
        <taxon>Rickettsieae</taxon>
        <taxon>Rickettsia</taxon>
        <taxon>typhus group</taxon>
    </lineage>
</organism>
<gene>
    <name type="primary">trxB</name>
    <name type="ordered locus">RT0432</name>
</gene>
<evidence type="ECO:0000250" key="1"/>
<evidence type="ECO:0000250" key="2">
    <source>
        <dbReference type="UniProtKB" id="P0A9P4"/>
    </source>
</evidence>
<evidence type="ECO:0000305" key="3"/>
<feature type="chain" id="PRO_0000274792" description="Thioredoxin reductase">
    <location>
        <begin position="1"/>
        <end position="310"/>
    </location>
</feature>
<feature type="binding site" evidence="2">
    <location>
        <begin position="34"/>
        <end position="41"/>
    </location>
    <ligand>
        <name>FAD</name>
        <dbReference type="ChEBI" id="CHEBI:57692"/>
    </ligand>
</feature>
<feature type="binding site" evidence="2">
    <location>
        <begin position="281"/>
        <end position="290"/>
    </location>
    <ligand>
        <name>FAD</name>
        <dbReference type="ChEBI" id="CHEBI:57692"/>
    </ligand>
</feature>
<feature type="disulfide bond" description="Redox-active" evidence="2">
    <location>
        <begin position="135"/>
        <end position="138"/>
    </location>
</feature>
<proteinExistence type="inferred from homology"/>
<protein>
    <recommendedName>
        <fullName>Thioredoxin reductase</fullName>
        <shortName>TRXR</shortName>
        <ecNumber>1.8.1.9</ecNumber>
    </recommendedName>
</protein>
<name>TRXB_RICTY</name>
<accession>Q68WT3</accession>
<sequence length="310" mass="33699">MKITTKVLIIGSGPAGLSAAIYTARSSLKPILINGMQPGGQLTMTTDVENYPGFAKTIQGPWLMEQMSIQAKNVGTEIINDYVERVDLSKRPFKIFTGTGNKYEADSIIICTGAESKWLGITSEQEFRGFGVSSCAICDGFFFKNQDIVVVGGGNSALEEALYLTNHANKVTVVHRRNSFRAEKILQDRLFKNPKISVIWDHVIDEIVGSNQPKTVTGVKIKNVYTNEINLVNCSGVFIAIGHTPNTTLFNGQIAIDDDNYIITQTGSTRTSVEGVFAAGDVQDKIYRQAITAAASGCMAALEVAKFLNK</sequence>
<dbReference type="EC" id="1.8.1.9"/>
<dbReference type="EMBL" id="AE017197">
    <property type="protein sequence ID" value="AAU03909.1"/>
    <property type="molecule type" value="Genomic_DNA"/>
</dbReference>
<dbReference type="RefSeq" id="WP_011190893.1">
    <property type="nucleotide sequence ID" value="NC_006142.1"/>
</dbReference>
<dbReference type="SMR" id="Q68WT3"/>
<dbReference type="KEGG" id="rty:RT0432"/>
<dbReference type="eggNOG" id="COG0492">
    <property type="taxonomic scope" value="Bacteria"/>
</dbReference>
<dbReference type="HOGENOM" id="CLU_031864_5_1_5"/>
<dbReference type="OrthoDB" id="9806179at2"/>
<dbReference type="Proteomes" id="UP000000604">
    <property type="component" value="Chromosome"/>
</dbReference>
<dbReference type="GO" id="GO:0005737">
    <property type="term" value="C:cytoplasm"/>
    <property type="evidence" value="ECO:0007669"/>
    <property type="project" value="UniProtKB-SubCell"/>
</dbReference>
<dbReference type="GO" id="GO:0004791">
    <property type="term" value="F:thioredoxin-disulfide reductase (NADPH) activity"/>
    <property type="evidence" value="ECO:0007669"/>
    <property type="project" value="UniProtKB-EC"/>
</dbReference>
<dbReference type="GO" id="GO:0019430">
    <property type="term" value="P:removal of superoxide radicals"/>
    <property type="evidence" value="ECO:0007669"/>
    <property type="project" value="InterPro"/>
</dbReference>
<dbReference type="Gene3D" id="3.50.50.60">
    <property type="entry name" value="FAD/NAD(P)-binding domain"/>
    <property type="match status" value="2"/>
</dbReference>
<dbReference type="InterPro" id="IPR036188">
    <property type="entry name" value="FAD/NAD-bd_sf"/>
</dbReference>
<dbReference type="InterPro" id="IPR023753">
    <property type="entry name" value="FAD/NAD-binding_dom"/>
</dbReference>
<dbReference type="InterPro" id="IPR050097">
    <property type="entry name" value="Ferredoxin-NADP_redctase_2"/>
</dbReference>
<dbReference type="InterPro" id="IPR008255">
    <property type="entry name" value="Pyr_nucl-diS_OxRdtase_2_AS"/>
</dbReference>
<dbReference type="InterPro" id="IPR005982">
    <property type="entry name" value="Thioredox_Rdtase"/>
</dbReference>
<dbReference type="NCBIfam" id="TIGR01292">
    <property type="entry name" value="TRX_reduct"/>
    <property type="match status" value="1"/>
</dbReference>
<dbReference type="PANTHER" id="PTHR48105">
    <property type="entry name" value="THIOREDOXIN REDUCTASE 1-RELATED-RELATED"/>
    <property type="match status" value="1"/>
</dbReference>
<dbReference type="Pfam" id="PF07992">
    <property type="entry name" value="Pyr_redox_2"/>
    <property type="match status" value="1"/>
</dbReference>
<dbReference type="PRINTS" id="PR00368">
    <property type="entry name" value="FADPNR"/>
</dbReference>
<dbReference type="PRINTS" id="PR00469">
    <property type="entry name" value="PNDRDTASEII"/>
</dbReference>
<dbReference type="SUPFAM" id="SSF51905">
    <property type="entry name" value="FAD/NAD(P)-binding domain"/>
    <property type="match status" value="1"/>
</dbReference>
<dbReference type="PROSITE" id="PS00573">
    <property type="entry name" value="PYRIDINE_REDOX_2"/>
    <property type="match status" value="1"/>
</dbReference>
<reference key="1">
    <citation type="journal article" date="2004" name="J. Bacteriol.">
        <title>Complete genome sequence of Rickettsia typhi and comparison with sequences of other Rickettsiae.</title>
        <authorList>
            <person name="McLeod M.P."/>
            <person name="Qin X."/>
            <person name="Karpathy S.E."/>
            <person name="Gioia J."/>
            <person name="Highlander S.K."/>
            <person name="Fox G.E."/>
            <person name="McNeill T.Z."/>
            <person name="Jiang H."/>
            <person name="Muzny D."/>
            <person name="Jacob L.S."/>
            <person name="Hawes A.C."/>
            <person name="Sodergren E."/>
            <person name="Gill R."/>
            <person name="Hume J."/>
            <person name="Morgan M."/>
            <person name="Fan G."/>
            <person name="Amin A.G."/>
            <person name="Gibbs R.A."/>
            <person name="Hong C."/>
            <person name="Yu X.-J."/>
            <person name="Walker D.H."/>
            <person name="Weinstock G.M."/>
        </authorList>
    </citation>
    <scope>NUCLEOTIDE SEQUENCE [LARGE SCALE GENOMIC DNA]</scope>
    <source>
        <strain>ATCC VR-144 / Wilmington</strain>
    </source>
</reference>
<comment type="catalytic activity">
    <reaction>
        <text>[thioredoxin]-dithiol + NADP(+) = [thioredoxin]-disulfide + NADPH + H(+)</text>
        <dbReference type="Rhea" id="RHEA:20345"/>
        <dbReference type="Rhea" id="RHEA-COMP:10698"/>
        <dbReference type="Rhea" id="RHEA-COMP:10700"/>
        <dbReference type="ChEBI" id="CHEBI:15378"/>
        <dbReference type="ChEBI" id="CHEBI:29950"/>
        <dbReference type="ChEBI" id="CHEBI:50058"/>
        <dbReference type="ChEBI" id="CHEBI:57783"/>
        <dbReference type="ChEBI" id="CHEBI:58349"/>
        <dbReference type="EC" id="1.8.1.9"/>
    </reaction>
</comment>
<comment type="cofactor">
    <cofactor evidence="2">
        <name>FAD</name>
        <dbReference type="ChEBI" id="CHEBI:57692"/>
    </cofactor>
    <text evidence="2">Binds 1 FAD per subunit.</text>
</comment>
<comment type="subunit">
    <text evidence="2">Homodimer.</text>
</comment>
<comment type="subcellular location">
    <subcellularLocation>
        <location evidence="1">Cytoplasm</location>
    </subcellularLocation>
</comment>
<comment type="miscellaneous">
    <text>The active site is a redox-active disulfide bond.</text>
</comment>
<comment type="similarity">
    <text evidence="3">Belongs to the class-II pyridine nucleotide-disulfide oxidoreductase family.</text>
</comment>
<keyword id="KW-0963">Cytoplasm</keyword>
<keyword id="KW-1015">Disulfide bond</keyword>
<keyword id="KW-0274">FAD</keyword>
<keyword id="KW-0285">Flavoprotein</keyword>
<keyword id="KW-0521">NADP</keyword>
<keyword id="KW-0560">Oxidoreductase</keyword>
<keyword id="KW-0676">Redox-active center</keyword>